<organism evidence="5">
    <name type="scientific">Caenorhabditis elegans</name>
    <dbReference type="NCBI Taxonomy" id="6239"/>
    <lineage>
        <taxon>Eukaryota</taxon>
        <taxon>Metazoa</taxon>
        <taxon>Ecdysozoa</taxon>
        <taxon>Nematoda</taxon>
        <taxon>Chromadorea</taxon>
        <taxon>Rhabditida</taxon>
        <taxon>Rhabditina</taxon>
        <taxon>Rhabditomorpha</taxon>
        <taxon>Rhabditoidea</taxon>
        <taxon>Rhabditidae</taxon>
        <taxon>Peloderinae</taxon>
        <taxon>Caenorhabditis</taxon>
    </lineage>
</organism>
<keyword id="KW-0067">ATP-binding</keyword>
<keyword id="KW-0963">Cytoplasm</keyword>
<keyword id="KW-0547">Nucleotide-binding</keyword>
<keyword id="KW-0539">Nucleus</keyword>
<keyword id="KW-0647">Proteasome</keyword>
<keyword id="KW-1185">Reference proteome</keyword>
<proteinExistence type="evidence at protein level"/>
<comment type="function">
    <text evidence="1 3">Component of the 26S proteasome, a multiprotein complex involved in the ATP-dependent degradation of ubiquitinated proteins (PubMed:27528192). This complex plays a key role in the maintenance of protein homeostasis by removing misfolded or damaged proteins, which could impair cellular functions, and by removing proteins whose functions are no longer required (By similarity). Therefore, the proteasome participates in numerous cellular processes, including cell cycle progression, apoptosis, or DNA damage repair (By similarity). Belongs to the heterohexameric ring of AAA (ATPases associated with diverse cellular activities) proteins that unfolds ubiquitinated target proteins that are concurrently translocated into a proteolytic chamber and degraded into peptides (By similarity).</text>
</comment>
<comment type="subunit">
    <text evidence="1">Component of the 19S proteasome regulatory particle complex. The 26S proteasome consists of a 20S core particle (CP) and two 19S regulatory subunits (RP). The regulatory particle is made of a lid composed of 9 subunits, a base containing 6 ATPases including the PSMC3 homolog rpt-5 and few additional components.</text>
</comment>
<comment type="interaction">
    <interactant intactId="EBI-317201">
        <id>O76371</id>
    </interactant>
    <interactant intactId="EBI-317193">
        <id>Q10920</id>
        <label>psmd-9</label>
    </interactant>
    <organismsDiffer>false</organismsDiffer>
    <experiments>3</experiments>
</comment>
<comment type="interaction">
    <interactant intactId="EBI-317201">
        <id>O76371</id>
    </interactant>
    <interactant intactId="EBI-320304">
        <id>O17071</id>
        <label>rpt-4</label>
    </interactant>
    <organismsDiffer>false</organismsDiffer>
    <experiments>10</experiments>
</comment>
<comment type="subcellular location">
    <subcellularLocation>
        <location evidence="4">Cytoplasm</location>
    </subcellularLocation>
    <subcellularLocation>
        <location evidence="4">Nucleus</location>
    </subcellularLocation>
</comment>
<comment type="disruption phenotype">
    <text evidence="3">RNAi-mediated knockdown results in larval arrest and up-regulation of the aspartic protease ddi-1, indicative of proteasomal dysfunction. RNAi-mediated knockdown in a ddi-1, png-1, sel-11 or sel-1 mutant background results in reduced or failed expression of the proteasomal subunit rpt-3.</text>
</comment>
<comment type="similarity">
    <text evidence="4">Belongs to the AAA ATPase family.</text>
</comment>
<protein>
    <recommendedName>
        <fullName evidence="1">26S protease regulatory subunit 6A</fullName>
    </recommendedName>
    <alternativeName>
        <fullName evidence="6">Proteasome regulatory particle ATPase-like protein 5</fullName>
    </alternativeName>
</protein>
<name>PRS6A_CAEEL</name>
<dbReference type="EMBL" id="BX284601">
    <property type="protein sequence ID" value="CCD62966.1"/>
    <property type="molecule type" value="Genomic_DNA"/>
</dbReference>
<dbReference type="PIR" id="T33155">
    <property type="entry name" value="T33155"/>
</dbReference>
<dbReference type="RefSeq" id="NP_491672.1">
    <property type="nucleotide sequence ID" value="NM_059271.7"/>
</dbReference>
<dbReference type="SMR" id="O76371"/>
<dbReference type="FunCoup" id="O76371">
    <property type="interactions" value="2551"/>
</dbReference>
<dbReference type="IntAct" id="O76371">
    <property type="interactions" value="4"/>
</dbReference>
<dbReference type="STRING" id="6239.F56H1.4.1"/>
<dbReference type="PaxDb" id="6239-F56H1.4"/>
<dbReference type="PeptideAtlas" id="O76371"/>
<dbReference type="EnsemblMetazoa" id="F56H1.4.1">
    <property type="protein sequence ID" value="F56H1.4.1"/>
    <property type="gene ID" value="WBGene00004505"/>
</dbReference>
<dbReference type="GeneID" id="172238"/>
<dbReference type="KEGG" id="cel:CELE_F56H1.4"/>
<dbReference type="UCSC" id="F56H1.4.2">
    <property type="organism name" value="c. elegans"/>
</dbReference>
<dbReference type="AGR" id="WB:WBGene00004505"/>
<dbReference type="CTD" id="172238"/>
<dbReference type="WormBase" id="F56H1.4">
    <property type="protein sequence ID" value="CE17915"/>
    <property type="gene ID" value="WBGene00004505"/>
    <property type="gene designation" value="rpt-5"/>
</dbReference>
<dbReference type="eggNOG" id="KOG0652">
    <property type="taxonomic scope" value="Eukaryota"/>
</dbReference>
<dbReference type="GeneTree" id="ENSGT01020000230346"/>
<dbReference type="HOGENOM" id="CLU_000688_2_4_1"/>
<dbReference type="InParanoid" id="O76371"/>
<dbReference type="OMA" id="NKISHEH"/>
<dbReference type="OrthoDB" id="9443236at2759"/>
<dbReference type="PhylomeDB" id="O76371"/>
<dbReference type="Reactome" id="R-CEL-1234176">
    <property type="pathway name" value="Oxygen-dependent proline hydroxylation of Hypoxia-inducible Factor Alpha"/>
</dbReference>
<dbReference type="Reactome" id="R-CEL-1236978">
    <property type="pathway name" value="Cross-presentation of soluble exogenous antigens (endosomes)"/>
</dbReference>
<dbReference type="Reactome" id="R-CEL-187577">
    <property type="pathway name" value="SCF(Skp2)-mediated degradation of p27/p21"/>
</dbReference>
<dbReference type="Reactome" id="R-CEL-195253">
    <property type="pathway name" value="Degradation of beta-catenin by the destruction complex"/>
</dbReference>
<dbReference type="Reactome" id="R-CEL-349425">
    <property type="pathway name" value="Autodegradation of the E3 ubiquitin ligase COP1"/>
</dbReference>
<dbReference type="Reactome" id="R-CEL-350562">
    <property type="pathway name" value="Regulation of ornithine decarboxylase (ODC)"/>
</dbReference>
<dbReference type="Reactome" id="R-CEL-382556">
    <property type="pathway name" value="ABC-family proteins mediated transport"/>
</dbReference>
<dbReference type="Reactome" id="R-CEL-4608870">
    <property type="pathway name" value="Asymmetric localization of PCP proteins"/>
</dbReference>
<dbReference type="Reactome" id="R-CEL-4641258">
    <property type="pathway name" value="Degradation of DVL"/>
</dbReference>
<dbReference type="Reactome" id="R-CEL-5632684">
    <property type="pathway name" value="Hedgehog 'on' state"/>
</dbReference>
<dbReference type="Reactome" id="R-CEL-5687128">
    <property type="pathway name" value="MAPK6/MAPK4 signaling"/>
</dbReference>
<dbReference type="Reactome" id="R-CEL-5689603">
    <property type="pathway name" value="UCH proteinases"/>
</dbReference>
<dbReference type="Reactome" id="R-CEL-5689880">
    <property type="pathway name" value="Ub-specific processing proteases"/>
</dbReference>
<dbReference type="Reactome" id="R-CEL-6798695">
    <property type="pathway name" value="Neutrophil degranulation"/>
</dbReference>
<dbReference type="Reactome" id="R-CEL-68949">
    <property type="pathway name" value="Orc1 removal from chromatin"/>
</dbReference>
<dbReference type="Reactome" id="R-CEL-69017">
    <property type="pathway name" value="CDK-mediated phosphorylation and removal of Cdc6"/>
</dbReference>
<dbReference type="Reactome" id="R-CEL-69601">
    <property type="pathway name" value="Ubiquitin Mediated Degradation of Phosphorylated Cdc25A"/>
</dbReference>
<dbReference type="Reactome" id="R-CEL-75815">
    <property type="pathway name" value="Ubiquitin-dependent degradation of Cyclin D"/>
</dbReference>
<dbReference type="Reactome" id="R-CEL-8854050">
    <property type="pathway name" value="FBXL7 down-regulates AURKA during mitotic entry and in early mitosis"/>
</dbReference>
<dbReference type="Reactome" id="R-CEL-8939902">
    <property type="pathway name" value="Regulation of RUNX2 expression and activity"/>
</dbReference>
<dbReference type="Reactome" id="R-CEL-8941858">
    <property type="pathway name" value="Regulation of RUNX3 expression and activity"/>
</dbReference>
<dbReference type="Reactome" id="R-CEL-8948751">
    <property type="pathway name" value="Regulation of PTEN stability and activity"/>
</dbReference>
<dbReference type="Reactome" id="R-CEL-8951664">
    <property type="pathway name" value="Neddylation"/>
</dbReference>
<dbReference type="Reactome" id="R-CEL-9755511">
    <property type="pathway name" value="KEAP1-NFE2L2 pathway"/>
</dbReference>
<dbReference type="Reactome" id="R-CEL-9762114">
    <property type="pathway name" value="GSK3B and BTRC:CUL1-mediated-degradation of NFE2L2"/>
</dbReference>
<dbReference type="Reactome" id="R-CEL-983168">
    <property type="pathway name" value="Antigen processing: Ubiquitination &amp; Proteasome degradation"/>
</dbReference>
<dbReference type="Reactome" id="R-CEL-9907900">
    <property type="pathway name" value="Proteasome assembly"/>
</dbReference>
<dbReference type="PRO" id="PR:O76371"/>
<dbReference type="Proteomes" id="UP000001940">
    <property type="component" value="Chromosome I"/>
</dbReference>
<dbReference type="Bgee" id="WBGene00004505">
    <property type="expression patterns" value="Expressed in adult organism and 4 other cell types or tissues"/>
</dbReference>
<dbReference type="GO" id="GO:0005737">
    <property type="term" value="C:cytoplasm"/>
    <property type="evidence" value="ECO:0007669"/>
    <property type="project" value="UniProtKB-SubCell"/>
</dbReference>
<dbReference type="GO" id="GO:0005634">
    <property type="term" value="C:nucleus"/>
    <property type="evidence" value="ECO:0007669"/>
    <property type="project" value="UniProtKB-SubCell"/>
</dbReference>
<dbReference type="GO" id="GO:0008540">
    <property type="term" value="C:proteasome regulatory particle, base subcomplex"/>
    <property type="evidence" value="ECO:0000318"/>
    <property type="project" value="GO_Central"/>
</dbReference>
<dbReference type="GO" id="GO:0005524">
    <property type="term" value="F:ATP binding"/>
    <property type="evidence" value="ECO:0007669"/>
    <property type="project" value="UniProtKB-KW"/>
</dbReference>
<dbReference type="GO" id="GO:0016887">
    <property type="term" value="F:ATP hydrolysis activity"/>
    <property type="evidence" value="ECO:0007669"/>
    <property type="project" value="InterPro"/>
</dbReference>
<dbReference type="GO" id="GO:0036402">
    <property type="term" value="F:proteasome-activating activity"/>
    <property type="evidence" value="ECO:0000318"/>
    <property type="project" value="GO_Central"/>
</dbReference>
<dbReference type="GO" id="GO:0043161">
    <property type="term" value="P:proteasome-mediated ubiquitin-dependent protein catabolic process"/>
    <property type="evidence" value="ECO:0000318"/>
    <property type="project" value="GO_Central"/>
</dbReference>
<dbReference type="FunFam" id="1.10.8.60:FF:000009">
    <property type="entry name" value="26S protease regulatory subunit 6A"/>
    <property type="match status" value="1"/>
</dbReference>
<dbReference type="FunFam" id="2.40.50.140:FF:000076">
    <property type="entry name" value="26S protease regulatory subunit 6A"/>
    <property type="match status" value="1"/>
</dbReference>
<dbReference type="FunFam" id="3.40.50.300:FF:000037">
    <property type="entry name" value="26S protease regulatory subunit 6A"/>
    <property type="match status" value="1"/>
</dbReference>
<dbReference type="Gene3D" id="1.10.8.60">
    <property type="match status" value="1"/>
</dbReference>
<dbReference type="Gene3D" id="2.40.50.140">
    <property type="entry name" value="Nucleic acid-binding proteins"/>
    <property type="match status" value="1"/>
</dbReference>
<dbReference type="Gene3D" id="3.40.50.300">
    <property type="entry name" value="P-loop containing nucleotide triphosphate hydrolases"/>
    <property type="match status" value="1"/>
</dbReference>
<dbReference type="InterPro" id="IPR050221">
    <property type="entry name" value="26S_Proteasome_ATPase"/>
</dbReference>
<dbReference type="InterPro" id="IPR003593">
    <property type="entry name" value="AAA+_ATPase"/>
</dbReference>
<dbReference type="InterPro" id="IPR041569">
    <property type="entry name" value="AAA_lid_3"/>
</dbReference>
<dbReference type="InterPro" id="IPR003959">
    <property type="entry name" value="ATPase_AAA_core"/>
</dbReference>
<dbReference type="InterPro" id="IPR003960">
    <property type="entry name" value="ATPase_AAA_CS"/>
</dbReference>
<dbReference type="InterPro" id="IPR012340">
    <property type="entry name" value="NA-bd_OB-fold"/>
</dbReference>
<dbReference type="InterPro" id="IPR027417">
    <property type="entry name" value="P-loop_NTPase"/>
</dbReference>
<dbReference type="InterPro" id="IPR032501">
    <property type="entry name" value="Prot_ATP_ID_OB_2nd"/>
</dbReference>
<dbReference type="PANTHER" id="PTHR23073">
    <property type="entry name" value="26S PROTEASOME REGULATORY SUBUNIT"/>
    <property type="match status" value="1"/>
</dbReference>
<dbReference type="Pfam" id="PF00004">
    <property type="entry name" value="AAA"/>
    <property type="match status" value="1"/>
</dbReference>
<dbReference type="Pfam" id="PF17862">
    <property type="entry name" value="AAA_lid_3"/>
    <property type="match status" value="1"/>
</dbReference>
<dbReference type="Pfam" id="PF16450">
    <property type="entry name" value="Prot_ATP_ID_OB_C"/>
    <property type="match status" value="1"/>
</dbReference>
<dbReference type="SMART" id="SM00382">
    <property type="entry name" value="AAA"/>
    <property type="match status" value="1"/>
</dbReference>
<dbReference type="SUPFAM" id="SSF52540">
    <property type="entry name" value="P-loop containing nucleoside triphosphate hydrolases"/>
    <property type="match status" value="1"/>
</dbReference>
<dbReference type="PROSITE" id="PS00674">
    <property type="entry name" value="AAA"/>
    <property type="match status" value="1"/>
</dbReference>
<sequence length="430" mass="48126">MSQTPPPKDGKNPEAMEVEDAIDEEILKMSTEDLKSRTHLLDNEIRIMRSEVQRINHSATTLKERIKENTERIKVNKTLPYLVSNVVELLDLEDNTEEEGANVDLDAQKTKCAVIKTSTRATYFLPVVGLVDPDELKPGDLVGVNKDSYLILEKLPAEYDSRVKAMEVDERPTEQYSDIGGCDKQIQELIEAVVLPMTHKDRFVNLGIHPPKGVLMYGPPGTGKTMMARAVAAQTKSTFLKLAGPQLVQMFIGDGAKLVRDAFALAKEKAPAIIFIDELDAIGTKRFDSEKAGDREVQRTMLELLNQLDGFQPNDDIKVIAATNRIDVLDPALLRSGRLDRKIELPHPNEDARARIMQIHSRKMNVNKDVNFEELARCTDDFNGAQCKAVCVEAGMIALRRDATEILHEDFMDAILEVQAKKKASLNYYA</sequence>
<accession>O76371</accession>
<gene>
    <name evidence="6" type="primary">rpt-5</name>
    <name evidence="6" type="ORF">F56H1.4</name>
</gene>
<feature type="chain" id="PRO_0000442335" description="26S protease regulatory subunit 6A" evidence="4">
    <location>
        <begin position="1"/>
        <end position="430"/>
    </location>
</feature>
<feature type="binding site" evidence="2">
    <location>
        <begin position="218"/>
        <end position="225"/>
    </location>
    <ligand>
        <name>ATP</name>
        <dbReference type="ChEBI" id="CHEBI:30616"/>
    </ligand>
</feature>
<evidence type="ECO:0000250" key="1">
    <source>
        <dbReference type="UniProtKB" id="P17980"/>
    </source>
</evidence>
<evidence type="ECO:0000255" key="2">
    <source>
        <dbReference type="PROSITE-ProRule" id="PRU00499"/>
    </source>
</evidence>
<evidence type="ECO:0000269" key="3">
    <source>
    </source>
</evidence>
<evidence type="ECO:0000305" key="4"/>
<evidence type="ECO:0000312" key="5">
    <source>
        <dbReference type="Proteomes" id="UP000001940"/>
    </source>
</evidence>
<evidence type="ECO:0000312" key="6">
    <source>
        <dbReference type="WormBase" id="F56H1.4"/>
    </source>
</evidence>
<reference evidence="5" key="1">
    <citation type="journal article" date="1998" name="Science">
        <title>Genome sequence of the nematode C. elegans: a platform for investigating biology.</title>
        <authorList>
            <consortium name="The C. elegans sequencing consortium"/>
        </authorList>
    </citation>
    <scope>NUCLEOTIDE SEQUENCE [LARGE SCALE GENOMIC DNA]</scope>
    <source>
        <strain evidence="5">Bristol N2</strain>
    </source>
</reference>
<reference evidence="4" key="2">
    <citation type="journal article" date="2016" name="Elife">
        <title>Proteasome dysfunction triggers activation of SKN-1A/Nrf1 by the aspartic protease DDI-1.</title>
        <authorList>
            <person name="Lehrbach N.J."/>
            <person name="Ruvkun G."/>
        </authorList>
    </citation>
    <scope>FUNCTION</scope>
    <scope>DISRUPTION PHENOTYPE</scope>
</reference>